<comment type="function">
    <text evidence="6 8 9">Metalloproteinase which specifically cleaves IGFBP-4 and IGFBP-5, resulting in release of bound IGF. Cleavage of IGFBP-4 is dramatically enhanced by the presence of IGF, whereas cleavage of IGFBP-5 is slightly inhibited by the presence of IGF.</text>
</comment>
<comment type="catalytic activity">
    <reaction>
        <text>Cleavage of the 135-Met-|-Lys-136 bond in insulin-like growth factor binding protein (IGFBP)-4, and the 143-Ser-|-Lys-144 bond in IGFBP-5.</text>
        <dbReference type="EC" id="3.4.24.79"/>
    </reaction>
</comment>
<comment type="cofactor">
    <cofactor evidence="1">
        <name>Zn(2+)</name>
        <dbReference type="ChEBI" id="CHEBI:29105"/>
    </cofactor>
    <text evidence="1">Binds 1 zinc ion per subunit.</text>
</comment>
<comment type="activity regulation">
    <text evidence="8">Inhibited by complexation with the proform of PRG2.</text>
</comment>
<comment type="subunit">
    <text evidence="8 11 16">Homodimer; disulfide-linked. In pregnancy serum, predominantly found as a disulfide-linked 2:2 heterotetramer with the proform of PRG2.</text>
</comment>
<comment type="interaction">
    <interactant intactId="EBI-1221991">
        <id>Q13219</id>
    </interactant>
    <interactant intactId="EBI-716689">
        <id>P13727</id>
        <label>PRG2</label>
    </interactant>
    <organismsDiffer>false</organismsDiffer>
    <experiments>2</experiments>
</comment>
<comment type="subcellular location">
    <subcellularLocation>
        <location evidence="6">Secreted</location>
    </subcellularLocation>
</comment>
<comment type="tissue specificity">
    <text evidence="6 7 13 14">High levels in placenta and pregnancy serum. In placenta, expressed in X cells in septa and anchoring villi, and in syncytiotrophoblasts in the chorionic villi. Lower levels are found in a variety of other tissues including kidney, myometrium, endometrium, ovaries, breast, prostate, bone marrow, colon, fibroblasts and osteoblasts.</text>
</comment>
<comment type="developmental stage">
    <text evidence="7 15">Present in serum and placenta during pregnancy; levels increase throughout pregnancy.</text>
</comment>
<comment type="induction">
    <text evidence="17">By 8-bromoadenosine-3',5'-phosphate.</text>
</comment>
<comment type="PTM">
    <text>There appear to be no free sulfhydryl groups.</text>
</comment>
<comment type="similarity">
    <text evidence="18">Belongs to the peptidase M43B family.</text>
</comment>
<comment type="sequence caution" evidence="18">
    <conflict type="frameshift">
        <sequence resource="EMBL-CDS" id="AAC50543"/>
    </conflict>
</comment>
<protein>
    <recommendedName>
        <fullName>Pappalysin-1</fullName>
        <ecNumber>3.4.24.79</ecNumber>
    </recommendedName>
    <alternativeName>
        <fullName>Insulin-like growth factor-dependent IGF-binding protein 4 protease</fullName>
        <shortName>IGF-dependent IGFBP-4 protease</shortName>
        <shortName>IGFBP-4ase</shortName>
    </alternativeName>
    <alternativeName>
        <fullName>Pregnancy-associated plasma protein A</fullName>
        <shortName>PAPP-A</shortName>
    </alternativeName>
</protein>
<evidence type="ECO:0000250" key="1"/>
<evidence type="ECO:0000255" key="2"/>
<evidence type="ECO:0000255" key="3">
    <source>
        <dbReference type="PROSITE-ProRule" id="PRU00302"/>
    </source>
</evidence>
<evidence type="ECO:0000255" key="4">
    <source>
        <dbReference type="PROSITE-ProRule" id="PRU10095"/>
    </source>
</evidence>
<evidence type="ECO:0000256" key="5">
    <source>
        <dbReference type="SAM" id="MobiDB-lite"/>
    </source>
</evidence>
<evidence type="ECO:0000269" key="6">
    <source>
    </source>
</evidence>
<evidence type="ECO:0000269" key="7">
    <source>
    </source>
</evidence>
<evidence type="ECO:0000269" key="8">
    <source>
    </source>
</evidence>
<evidence type="ECO:0000269" key="9">
    <source>
    </source>
</evidence>
<evidence type="ECO:0000269" key="10">
    <source>
    </source>
</evidence>
<evidence type="ECO:0000269" key="11">
    <source>
    </source>
</evidence>
<evidence type="ECO:0000269" key="12">
    <source>
    </source>
</evidence>
<evidence type="ECO:0000269" key="13">
    <source>
    </source>
</evidence>
<evidence type="ECO:0000269" key="14">
    <source>
    </source>
</evidence>
<evidence type="ECO:0000269" key="15">
    <source>
    </source>
</evidence>
<evidence type="ECO:0000269" key="16">
    <source>
    </source>
</evidence>
<evidence type="ECO:0000269" key="17">
    <source>
    </source>
</evidence>
<evidence type="ECO:0000305" key="18"/>
<evidence type="ECO:0007829" key="19">
    <source>
        <dbReference type="PDB" id="7UFG"/>
    </source>
</evidence>
<evidence type="ECO:0007829" key="20">
    <source>
        <dbReference type="PDB" id="7Y5N"/>
    </source>
</evidence>
<evidence type="ECO:0007829" key="21">
    <source>
        <dbReference type="PDB" id="8A7D"/>
    </source>
</evidence>
<evidence type="ECO:0007829" key="22">
    <source>
        <dbReference type="PDB" id="8D8O"/>
    </source>
</evidence>
<reference key="1">
    <citation type="journal article" date="1996" name="Eur. J. Biochem.">
        <title>Complete cDNA sequence of the preproform of human pregnancy-associated plasma protein-A. Evidence for expression in the brain and induction by cAMP.</title>
        <authorList>
            <person name="Haaning J."/>
            <person name="Oxvig C."/>
            <person name="Overgaard M.T."/>
            <person name="Ebbesen P."/>
            <person name="Kristensen T."/>
            <person name="Sottrup-Jensen L."/>
        </authorList>
    </citation>
    <scope>NUCLEOTIDE SEQUENCE [MRNA]</scope>
    <scope>INDUCTION</scope>
    <scope>VARIANT ARG-944</scope>
    <source>
        <tissue>Placenta</tissue>
    </source>
</reference>
<reference key="2">
    <citation type="journal article" date="2004" name="Nature">
        <title>DNA sequence and analysis of human chromosome 9.</title>
        <authorList>
            <person name="Humphray S.J."/>
            <person name="Oliver K."/>
            <person name="Hunt A.R."/>
            <person name="Plumb R.W."/>
            <person name="Loveland J.E."/>
            <person name="Howe K.L."/>
            <person name="Andrews T.D."/>
            <person name="Searle S."/>
            <person name="Hunt S.E."/>
            <person name="Scott C.E."/>
            <person name="Jones M.C."/>
            <person name="Ainscough R."/>
            <person name="Almeida J.P."/>
            <person name="Ambrose K.D."/>
            <person name="Ashwell R.I.S."/>
            <person name="Babbage A.K."/>
            <person name="Babbage S."/>
            <person name="Bagguley C.L."/>
            <person name="Bailey J."/>
            <person name="Banerjee R."/>
            <person name="Barker D.J."/>
            <person name="Barlow K.F."/>
            <person name="Bates K."/>
            <person name="Beasley H."/>
            <person name="Beasley O."/>
            <person name="Bird C.P."/>
            <person name="Bray-Allen S."/>
            <person name="Brown A.J."/>
            <person name="Brown J.Y."/>
            <person name="Burford D."/>
            <person name="Burrill W."/>
            <person name="Burton J."/>
            <person name="Carder C."/>
            <person name="Carter N.P."/>
            <person name="Chapman J.C."/>
            <person name="Chen Y."/>
            <person name="Clarke G."/>
            <person name="Clark S.Y."/>
            <person name="Clee C.M."/>
            <person name="Clegg S."/>
            <person name="Collier R.E."/>
            <person name="Corby N."/>
            <person name="Crosier M."/>
            <person name="Cummings A.T."/>
            <person name="Davies J."/>
            <person name="Dhami P."/>
            <person name="Dunn M."/>
            <person name="Dutta I."/>
            <person name="Dyer L.W."/>
            <person name="Earthrowl M.E."/>
            <person name="Faulkner L."/>
            <person name="Fleming C.J."/>
            <person name="Frankish A."/>
            <person name="Frankland J.A."/>
            <person name="French L."/>
            <person name="Fricker D.G."/>
            <person name="Garner P."/>
            <person name="Garnett J."/>
            <person name="Ghori J."/>
            <person name="Gilbert J.G.R."/>
            <person name="Glison C."/>
            <person name="Grafham D.V."/>
            <person name="Gribble S."/>
            <person name="Griffiths C."/>
            <person name="Griffiths-Jones S."/>
            <person name="Grocock R."/>
            <person name="Guy J."/>
            <person name="Hall R.E."/>
            <person name="Hammond S."/>
            <person name="Harley J.L."/>
            <person name="Harrison E.S.I."/>
            <person name="Hart E.A."/>
            <person name="Heath P.D."/>
            <person name="Henderson C.D."/>
            <person name="Hopkins B.L."/>
            <person name="Howard P.J."/>
            <person name="Howden P.J."/>
            <person name="Huckle E."/>
            <person name="Johnson C."/>
            <person name="Johnson D."/>
            <person name="Joy A.A."/>
            <person name="Kay M."/>
            <person name="Keenan S."/>
            <person name="Kershaw J.K."/>
            <person name="Kimberley A.M."/>
            <person name="King A."/>
            <person name="Knights A."/>
            <person name="Laird G.K."/>
            <person name="Langford C."/>
            <person name="Lawlor S."/>
            <person name="Leongamornlert D.A."/>
            <person name="Leversha M."/>
            <person name="Lloyd C."/>
            <person name="Lloyd D.M."/>
            <person name="Lovell J."/>
            <person name="Martin S."/>
            <person name="Mashreghi-Mohammadi M."/>
            <person name="Matthews L."/>
            <person name="McLaren S."/>
            <person name="McLay K.E."/>
            <person name="McMurray A."/>
            <person name="Milne S."/>
            <person name="Nickerson T."/>
            <person name="Nisbett J."/>
            <person name="Nordsiek G."/>
            <person name="Pearce A.V."/>
            <person name="Peck A.I."/>
            <person name="Porter K.M."/>
            <person name="Pandian R."/>
            <person name="Pelan S."/>
            <person name="Phillimore B."/>
            <person name="Povey S."/>
            <person name="Ramsey Y."/>
            <person name="Rand V."/>
            <person name="Scharfe M."/>
            <person name="Sehra H.K."/>
            <person name="Shownkeen R."/>
            <person name="Sims S.K."/>
            <person name="Skuce C.D."/>
            <person name="Smith M."/>
            <person name="Steward C.A."/>
            <person name="Swarbreck D."/>
            <person name="Sycamore N."/>
            <person name="Tester J."/>
            <person name="Thorpe A."/>
            <person name="Tracey A."/>
            <person name="Tromans A."/>
            <person name="Thomas D.W."/>
            <person name="Wall M."/>
            <person name="Wallis J.M."/>
            <person name="West A.P."/>
            <person name="Whitehead S.L."/>
            <person name="Willey D.L."/>
            <person name="Williams S.A."/>
            <person name="Wilming L."/>
            <person name="Wray P.W."/>
            <person name="Young L."/>
            <person name="Ashurst J.L."/>
            <person name="Coulson A."/>
            <person name="Blocker H."/>
            <person name="Durbin R.M."/>
            <person name="Sulston J.E."/>
            <person name="Hubbard T."/>
            <person name="Jackson M.J."/>
            <person name="Bentley D.R."/>
            <person name="Beck S."/>
            <person name="Rogers J."/>
            <person name="Dunham I."/>
        </authorList>
    </citation>
    <scope>NUCLEOTIDE SEQUENCE [LARGE SCALE GENOMIC DNA]</scope>
</reference>
<reference key="3">
    <citation type="journal article" date="2004" name="Genome Res.">
        <title>The status, quality, and expansion of the NIH full-length cDNA project: the Mammalian Gene Collection (MGC).</title>
        <authorList>
            <consortium name="The MGC Project Team"/>
        </authorList>
    </citation>
    <scope>NUCLEOTIDE SEQUENCE [LARGE SCALE MRNA]</scope>
    <scope>VARIANT TYR-1224</scope>
    <source>
        <tissue>Placenta</tissue>
    </source>
</reference>
<reference key="4">
    <citation type="journal article" date="1994" name="Biochemistry">
        <title>Amino acid sequence of human pregnancy-associated plasma protein-A derived from cloned cDNA.</title>
        <authorList>
            <person name="Kristensen T."/>
            <person name="Oxvig C."/>
            <person name="Sand O."/>
            <person name="Moller N.P.H."/>
            <person name="Sottrup-Jensen L."/>
        </authorList>
    </citation>
    <scope>NUCLEOTIDE SEQUENCE [MRNA] OF 77-1627</scope>
    <scope>PROTEIN SEQUENCE OF 82-98; 117-126; 210-224; 466-485; 507-519; 576-593; 609-621; 718-736; 742-754; 1006-1017; 1259-1273; 1369-1374; 1389-1398; 1490-1509; 1524-1533 AND 1537-1544</scope>
    <scope>VARIANT ARG-944</scope>
    <scope>TISSUE SPECIFICITY</scope>
    <source>
        <tissue>Placenta</tissue>
        <tissue>Serum</tissue>
    </source>
</reference>
<reference key="5">
    <citation type="journal article" date="1993" name="J. Biol. Chem.">
        <title>Circulating human pregnancy-associated plasma protein-A is disulfide-bridged to the proform of eosinophil major basic protein.</title>
        <authorList>
            <person name="Oxvig C."/>
            <person name="Sand O."/>
            <person name="Kristensen T."/>
            <person name="Gleich G.J."/>
            <person name="Sottrup-Jensen L."/>
        </authorList>
    </citation>
    <scope>PROTEIN SEQUENCE OF 81-89; 117-126; 210-224; 460-485; 507-519; 576-593; 718-736; 742-754; 1259-1273; 1369-1374; 1490-1509; 1524-1533 AND 1537-1544</scope>
    <scope>SUBUNIT</scope>
    <scope>INTERCHAIN DISULFIDE BOND</scope>
    <source>
        <tissue>Serum</tissue>
    </source>
</reference>
<reference key="6">
    <citation type="journal article" date="2003" name="J. Biol. Chem.">
        <title>Complex of pregnancy-associated plasma protein-A and the proform of eosinophil major basic protein. Disulfide structure and carbohydrate attachment sites.</title>
        <authorList>
            <person name="Overgaard M.T."/>
            <person name="Sorensen E.S."/>
            <person name="Stachowiak D."/>
            <person name="Boldt H.B."/>
            <person name="Kristensen L."/>
            <person name="Sottrup-Jensen L."/>
            <person name="Oxvig C."/>
        </authorList>
    </citation>
    <scope>PARTIAL PROTEIN SEQUENCE</scope>
    <scope>GLYCOSYLATION AT ASN-402; ASN-429; ASN-480; ASN-601; ASN-619; ASN-725; ASN-1026; ASN-1226; ASN-1323 AND ASN-1519</scope>
    <scope>DISULFIDE BONDS</scope>
</reference>
<reference key="7">
    <citation type="journal article" date="1999" name="Proc. Natl. Acad. Sci. U.S.A.">
        <title>The insulin-like growth factor (IGF)-dependent IGF binding protein-4 protease secreted by human fibroblasts is pregnancy-associated plasma protein-A.</title>
        <authorList>
            <person name="Lawrence J.B."/>
            <person name="Oxvig C."/>
            <person name="Overgaard M.T."/>
            <person name="Sottrup-Jensen L."/>
            <person name="Gleich G.J."/>
            <person name="Hays L.G."/>
            <person name="Yates J.R. III"/>
            <person name="Conover C.A."/>
        </authorList>
    </citation>
    <scope>IDENTIFICATION</scope>
    <scope>FUNCTION</scope>
    <scope>SUBCELLULAR LOCATION</scope>
    <scope>TISSUE SPECIFICITY</scope>
    <source>
        <tissue>Fibroblast</tissue>
    </source>
</reference>
<reference key="8">
    <citation type="journal article" date="2000" name="J. Biol. Chem.">
        <title>Expression of recombinant human pregnancy-associated plasma protein-A and identification of the proform of eosinophil major basic protein as its physiological inhibitor.</title>
        <authorList>
            <person name="Overgaard M.T."/>
            <person name="Haaning J."/>
            <person name="Boldt H.B."/>
            <person name="Olsen I.M."/>
            <person name="Laursen L.S."/>
            <person name="Christiansen M."/>
            <person name="Gleich G.J."/>
            <person name="Sottrup-Jensen L."/>
            <person name="Conover C.A."/>
            <person name="Oxvig C."/>
        </authorList>
    </citation>
    <scope>FUNCTION</scope>
    <scope>SUBUNIT</scope>
    <scope>ACTIVITY REGULATION</scope>
</reference>
<reference key="9">
    <citation type="journal article" date="1994" name="Lab. Invest.">
        <title>Localization of pregnancy-associated plasma protein-A and colocalization of pregnancy-associated plasma protein-A messenger ribonucleic acid and eosinophil granule major basic protein messenger ribonucleic acid in placenta.</title>
        <authorList>
            <person name="Bonno M."/>
            <person name="Oxvig C."/>
            <person name="Kephart G.M."/>
            <person name="Wagner J.M."/>
            <person name="Kristensen T."/>
            <person name="Sottrup-Jensen L."/>
            <person name="Gleich G.J."/>
        </authorList>
    </citation>
    <scope>TISSUE SPECIFICITY</scope>
</reference>
<reference key="10">
    <citation type="journal article" date="1999" name="Biol. Reprod.">
        <title>Messenger ribonucleic acid levels of pregnancy-associated plasma protein-A and the proform of eosinophil major basic protein: expression in human reproductive and nonreproductive tissues.</title>
        <authorList>
            <person name="Overgaard M.T."/>
            <person name="Oxvig C."/>
            <person name="Christiansen M."/>
            <person name="Lawrence J.B."/>
            <person name="Conover C.A."/>
            <person name="Gleich G.J."/>
            <person name="Sottrup-Jensen L."/>
            <person name="Haaning J."/>
        </authorList>
    </citation>
    <scope>TISSUE SPECIFICITY</scope>
    <scope>DEVELOPMENTAL STAGE</scope>
</reference>
<reference key="11">
    <citation type="journal article" date="1995" name="J. Biol. Chem.">
        <title>Identification of angiotensinogen and complement C3dg as novel proteins binding the proform of eosinophil major basic protein in human pregnancy serum and plasma.</title>
        <authorList>
            <person name="Oxvig C."/>
            <person name="Haaning J."/>
            <person name="Kristensen L."/>
            <person name="Wagner J.M."/>
            <person name="Rubin I."/>
            <person name="Stigbrand T."/>
            <person name="Gleich G.J."/>
            <person name="Sottrup-Jensen L."/>
        </authorList>
    </citation>
    <scope>DEVELOPMENTAL STAGE</scope>
</reference>
<reference key="12">
    <citation type="journal article" date="2001" name="FEBS Lett.">
        <title>Pregnancy-associated plasma protein-A (PAPP-A) cleaves insulin-like growth factor binding protein (IGFBP)-5 independent of IGF: implications for the mechanism of IGFBP-4 proteolysis by PAPP-A.</title>
        <authorList>
            <person name="Laursen L.S."/>
            <person name="Overgaard M.T."/>
            <person name="Soe R."/>
            <person name="Boldt H.B."/>
            <person name="Sottrup-Jensen L."/>
            <person name="Giudice L.C."/>
            <person name="Conover C.A."/>
            <person name="Oxvig C."/>
        </authorList>
    </citation>
    <scope>FUNCTION</scope>
</reference>
<reference key="13">
    <citation type="journal article" date="2002" name="Am. J. Hum. Genet.">
        <title>Limb-girdle muscular dystrophy type 2H associated with mutation in TRIM32, a putative E3-ubiquitin-ligase gene.</title>
        <authorList>
            <person name="Frosk P."/>
            <person name="Weiler T."/>
            <person name="Nylen E."/>
            <person name="Sudha T."/>
            <person name="Greenberg C.R."/>
            <person name="Morgan K."/>
            <person name="Fujiwara T.M."/>
            <person name="Wrogemann K."/>
        </authorList>
    </citation>
    <scope>VARIANT TYR-1224</scope>
</reference>
<feature type="signal peptide" evidence="2">
    <location>
        <begin position="1"/>
        <end position="22"/>
    </location>
</feature>
<feature type="propeptide" id="PRO_0000029245" evidence="13 16">
    <location>
        <begin position="23"/>
        <end position="81"/>
    </location>
</feature>
<feature type="chain" id="PRO_0000029246" description="Pappalysin-1">
    <location>
        <begin position="82"/>
        <end position="1627"/>
    </location>
</feature>
<feature type="domain" description="Sushi 1" evidence="3">
    <location>
        <begin position="1213"/>
        <end position="1282"/>
    </location>
</feature>
<feature type="domain" description="Sushi 2" evidence="3">
    <location>
        <begin position="1283"/>
        <end position="1344"/>
    </location>
</feature>
<feature type="domain" description="Sushi 3" evidence="3">
    <location>
        <begin position="1345"/>
        <end position="1412"/>
    </location>
</feature>
<feature type="domain" description="Sushi 4" evidence="3">
    <location>
        <begin position="1413"/>
        <end position="1473"/>
    </location>
</feature>
<feature type="domain" description="Sushi 5" evidence="3">
    <location>
        <begin position="1476"/>
        <end position="1556"/>
    </location>
</feature>
<feature type="region of interest" description="Disordered" evidence="5">
    <location>
        <begin position="23"/>
        <end position="99"/>
    </location>
</feature>
<feature type="region of interest" description="Metalloprotease">
    <location>
        <begin position="272"/>
        <end position="583"/>
    </location>
</feature>
<feature type="region of interest" description="Disordered" evidence="5">
    <location>
        <begin position="733"/>
        <end position="754"/>
    </location>
</feature>
<feature type="compositionally biased region" description="Low complexity" evidence="5">
    <location>
        <begin position="42"/>
        <end position="51"/>
    </location>
</feature>
<feature type="compositionally biased region" description="Basic and acidic residues" evidence="5">
    <location>
        <begin position="739"/>
        <end position="751"/>
    </location>
</feature>
<feature type="active site" evidence="4">
    <location>
        <position position="563"/>
    </location>
</feature>
<feature type="binding site" evidence="4">
    <location>
        <position position="562"/>
    </location>
    <ligand>
        <name>Zn(2+)</name>
        <dbReference type="ChEBI" id="CHEBI:29105"/>
        <note>catalytic</note>
    </ligand>
</feature>
<feature type="binding site" evidence="4">
    <location>
        <position position="566"/>
    </location>
    <ligand>
        <name>Zn(2+)</name>
        <dbReference type="ChEBI" id="CHEBI:29105"/>
        <note>catalytic</note>
    </ligand>
</feature>
<feature type="binding site" evidence="4">
    <location>
        <position position="572"/>
    </location>
    <ligand>
        <name>Zn(2+)</name>
        <dbReference type="ChEBI" id="CHEBI:29105"/>
        <note>catalytic</note>
    </ligand>
</feature>
<feature type="glycosylation site" description="N-linked (GlcNAc...) asparagine" evidence="2">
    <location>
        <position position="390"/>
    </location>
</feature>
<feature type="glycosylation site" description="N-linked (GlcNAc...) asparagine" evidence="11">
    <location>
        <position position="402"/>
    </location>
</feature>
<feature type="glycosylation site" description="N-linked (GlcNAc...) asparagine" evidence="11">
    <location>
        <position position="429"/>
    </location>
</feature>
<feature type="glycosylation site" description="N-linked (GlcNAc...) asparagine" evidence="11">
    <location>
        <position position="480"/>
    </location>
</feature>
<feature type="glycosylation site" description="N-linked (GlcNAc...) asparagine" evidence="11">
    <location>
        <position position="601"/>
    </location>
</feature>
<feature type="glycosylation site" description="N-linked (GlcNAc...) asparagine" evidence="11">
    <location>
        <position position="619"/>
    </location>
</feature>
<feature type="glycosylation site" description="N-linked (GlcNAc...) asparagine" evidence="11">
    <location>
        <position position="725"/>
    </location>
</feature>
<feature type="glycosylation site" description="N-linked (GlcNAc...) asparagine" evidence="2">
    <location>
        <position position="825"/>
    </location>
</feature>
<feature type="glycosylation site" description="N-linked (GlcNAc...) asparagine" evidence="11">
    <location>
        <position position="1026"/>
    </location>
</feature>
<feature type="glycosylation site" description="N-linked (GlcNAc...) asparagine" evidence="2">
    <location>
        <position position="1222"/>
    </location>
</feature>
<feature type="glycosylation site" description="N-linked (GlcNAc...) asparagine" evidence="11">
    <location>
        <position position="1226"/>
    </location>
</feature>
<feature type="glycosylation site" description="N-linked (GlcNAc...) asparagine" evidence="11">
    <location>
        <position position="1323"/>
    </location>
</feature>
<feature type="glycosylation site" description="N-linked (GlcNAc...) asparagine" evidence="2">
    <location>
        <position position="1465"/>
    </location>
</feature>
<feature type="glycosylation site" description="N-linked (GlcNAc...) asparagine" evidence="11">
    <location>
        <position position="1519"/>
    </location>
</feature>
<feature type="disulfide bond" evidence="3 11">
    <location>
        <begin position="144"/>
        <end position="235"/>
    </location>
</feature>
<feature type="disulfide bond" evidence="3 11">
    <location>
        <begin position="327"/>
        <end position="622"/>
    </location>
</feature>
<feature type="disulfide bond" evidence="3 11">
    <location>
        <begin position="332"/>
        <end position="657"/>
    </location>
</feature>
<feature type="disulfide bond" evidence="3 11">
    <location>
        <begin position="414"/>
        <end position="428"/>
    </location>
</feature>
<feature type="disulfide bond" evidence="3 11">
    <location>
        <begin position="424"/>
        <end position="440"/>
    </location>
</feature>
<feature type="disulfide bond" evidence="3 11">
    <location>
        <begin position="457"/>
        <end position="473"/>
    </location>
</feature>
<feature type="disulfide bond" description="Interchain (with C-51 in PRG2 proform)" evidence="3 11">
    <location>
        <position position="461"/>
    </location>
</feature>
<feature type="disulfide bond" evidence="3 11">
    <location>
        <begin position="474"/>
        <end position="485"/>
    </location>
</feature>
<feature type="disulfide bond" description="Or C-583 with C-612" evidence="3 11">
    <location>
        <begin position="583"/>
        <end position="600"/>
    </location>
</feature>
<feature type="disulfide bond" description="Or C-587 with C-600" evidence="3 11">
    <location>
        <begin position="587"/>
        <end position="612"/>
    </location>
</feature>
<feature type="disulfide bond" evidence="3 11">
    <location>
        <begin position="710"/>
        <end position="878"/>
    </location>
</feature>
<feature type="disulfide bond" evidence="3 11">
    <location>
        <begin position="713"/>
        <end position="881"/>
    </location>
</feature>
<feature type="disulfide bond" description="Interchain (with C-169 in PRG2 proform)" evidence="3 11">
    <location>
        <position position="732"/>
    </location>
</feature>
<feature type="disulfide bond" evidence="3 11">
    <location>
        <begin position="753"/>
        <end position="835"/>
    </location>
</feature>
<feature type="disulfide bond" evidence="3 11">
    <location>
        <begin position="775"/>
        <end position="781"/>
    </location>
</feature>
<feature type="disulfide bond" evidence="3 11">
    <location>
        <begin position="947"/>
        <end position="975"/>
    </location>
</feature>
<feature type="disulfide bond" evidence="3 11">
    <location>
        <begin position="960"/>
        <end position="971"/>
    </location>
</feature>
<feature type="disulfide bond" evidence="3 11">
    <location>
        <begin position="983"/>
        <end position="990"/>
    </location>
</feature>
<feature type="disulfide bond" evidence="3 11">
    <location>
        <begin position="999"/>
        <end position="1011"/>
    </location>
</feature>
<feature type="disulfide bond" evidence="3 11">
    <location>
        <begin position="1036"/>
        <end position="1070"/>
    </location>
</feature>
<feature type="disulfide bond" evidence="3 11">
    <location>
        <begin position="1051"/>
        <end position="1139"/>
    </location>
</feature>
<feature type="disulfide bond" evidence="3 11">
    <location>
        <begin position="1192"/>
        <end position="1205"/>
    </location>
</feature>
<feature type="disulfide bond" description="Interchain" evidence="3 11">
    <location>
        <position position="1210"/>
    </location>
</feature>
<feature type="disulfide bond" evidence="3 11">
    <location>
        <begin position="1215"/>
        <end position="1269"/>
    </location>
</feature>
<feature type="disulfide bond" evidence="3 11">
    <location>
        <begin position="1227"/>
        <end position="1238"/>
    </location>
</feature>
<feature type="disulfide bond" evidence="3 11">
    <location>
        <begin position="1242"/>
        <end position="1280"/>
    </location>
</feature>
<feature type="disulfide bond" evidence="3 11">
    <location>
        <begin position="1285"/>
        <end position="1329"/>
    </location>
</feature>
<feature type="disulfide bond" evidence="3 11">
    <location>
        <begin position="1300"/>
        <end position="1310"/>
    </location>
</feature>
<feature type="disulfide bond" evidence="3 11">
    <location>
        <begin position="1314"/>
        <end position="1342"/>
    </location>
</feature>
<feature type="disulfide bond" evidence="3 11">
    <location>
        <begin position="1346"/>
        <end position="1399"/>
    </location>
</feature>
<feature type="disulfide bond" evidence="3 11">
    <location>
        <begin position="1362"/>
        <end position="1373"/>
    </location>
</feature>
<feature type="disulfide bond" evidence="3 11">
    <location>
        <begin position="1377"/>
        <end position="1410"/>
    </location>
</feature>
<feature type="disulfide bond" evidence="3 11">
    <location>
        <begin position="1415"/>
        <end position="1458"/>
    </location>
</feature>
<feature type="disulfide bond" evidence="3 11">
    <location>
        <begin position="1428"/>
        <end position="1438"/>
    </location>
</feature>
<feature type="disulfide bond" evidence="3 11">
    <location>
        <begin position="1442"/>
        <end position="1471"/>
    </location>
</feature>
<feature type="disulfide bond" evidence="3 11">
    <location>
        <begin position="1478"/>
        <end position="1539"/>
    </location>
</feature>
<feature type="disulfide bond" evidence="3 11">
    <location>
        <begin position="1492"/>
        <end position="1502"/>
    </location>
</feature>
<feature type="disulfide bond" evidence="3 11">
    <location>
        <begin position="1506"/>
        <end position="1554"/>
    </location>
</feature>
<feature type="disulfide bond" evidence="3 11">
    <location>
        <begin position="1558"/>
        <end position="1576"/>
    </location>
</feature>
<feature type="sequence variant" id="VAR_057091" description="In dbSNP:rs417012.">
    <original>S</original>
    <variation>I</variation>
    <location>
        <position position="5"/>
    </location>
</feature>
<feature type="sequence variant" id="VAR_057092" description="In dbSNP:rs445159.">
    <original>P</original>
    <variation>L</variation>
    <location>
        <position position="325"/>
    </location>
</feature>
<feature type="sequence variant" id="VAR_011419" description="In dbSNP:rs117124330." evidence="13 17">
    <original>S</original>
    <variation>R</variation>
    <location>
        <position position="944"/>
    </location>
</feature>
<feature type="sequence variant" id="VAR_018726" description="In dbSNP:rs7020782." evidence="10 12">
    <original>S</original>
    <variation>Y</variation>
    <location>
        <position position="1224"/>
    </location>
</feature>
<feature type="sequence conflict" description="In Ref. 1; AAC50543 and 4; CAA48341." evidence="18" ref="1 4">
    <original>R</original>
    <variation>RV</variation>
    <location>
        <position position="107"/>
    </location>
</feature>
<feature type="sequence conflict" description="In Ref. 4; AA sequence." evidence="18" ref="4">
    <original>TH</original>
    <variation>RD</variation>
    <location>
        <begin position="511"/>
        <end position="512"/>
    </location>
</feature>
<feature type="sequence conflict" description="In Ref. 3; AAH78657." evidence="18" ref="3">
    <original>R</original>
    <variation>Q</variation>
    <location>
        <position position="1622"/>
    </location>
</feature>
<feature type="strand" evidence="21">
    <location>
        <begin position="95"/>
        <end position="103"/>
    </location>
</feature>
<feature type="strand" evidence="21">
    <location>
        <begin position="106"/>
        <end position="108"/>
    </location>
</feature>
<feature type="strand" evidence="21">
    <location>
        <begin position="119"/>
        <end position="127"/>
    </location>
</feature>
<feature type="strand" evidence="21">
    <location>
        <begin position="133"/>
        <end position="144"/>
    </location>
</feature>
<feature type="strand" evidence="20">
    <location>
        <begin position="146"/>
        <end position="148"/>
    </location>
</feature>
<feature type="strand" evidence="21">
    <location>
        <begin position="152"/>
        <end position="164"/>
    </location>
</feature>
<feature type="strand" evidence="21">
    <location>
        <begin position="167"/>
        <end position="175"/>
    </location>
</feature>
<feature type="strand" evidence="19">
    <location>
        <begin position="177"/>
        <end position="181"/>
    </location>
</feature>
<feature type="strand" evidence="21">
    <location>
        <begin position="183"/>
        <end position="186"/>
    </location>
</feature>
<feature type="strand" evidence="21">
    <location>
        <begin position="195"/>
        <end position="203"/>
    </location>
</feature>
<feature type="strand" evidence="21">
    <location>
        <begin position="208"/>
        <end position="212"/>
    </location>
</feature>
<feature type="strand" evidence="21">
    <location>
        <begin position="215"/>
        <end position="220"/>
    </location>
</feature>
<feature type="helix" evidence="21">
    <location>
        <begin position="230"/>
        <end position="235"/>
    </location>
</feature>
<feature type="strand" evidence="21">
    <location>
        <begin position="236"/>
        <end position="242"/>
    </location>
</feature>
<feature type="strand" evidence="21">
    <location>
        <begin position="250"/>
        <end position="261"/>
    </location>
</feature>
<feature type="helix" evidence="21">
    <location>
        <begin position="265"/>
        <end position="274"/>
    </location>
</feature>
<feature type="strand" evidence="21">
    <location>
        <begin position="284"/>
        <end position="287"/>
    </location>
</feature>
<feature type="helix" evidence="21">
    <location>
        <begin position="293"/>
        <end position="296"/>
    </location>
</feature>
<feature type="strand" evidence="21">
    <location>
        <begin position="297"/>
        <end position="299"/>
    </location>
</feature>
<feature type="turn" evidence="22">
    <location>
        <begin position="301"/>
        <end position="303"/>
    </location>
</feature>
<feature type="strand" evidence="21">
    <location>
        <begin position="307"/>
        <end position="310"/>
    </location>
</feature>
<feature type="helix" evidence="21">
    <location>
        <begin position="331"/>
        <end position="333"/>
    </location>
</feature>
<feature type="helix" evidence="21">
    <location>
        <begin position="335"/>
        <end position="343"/>
    </location>
</feature>
<feature type="helix" evidence="19">
    <location>
        <begin position="346"/>
        <end position="348"/>
    </location>
</feature>
<feature type="strand" evidence="21">
    <location>
        <begin position="351"/>
        <end position="361"/>
    </location>
</feature>
<feature type="helix" evidence="21">
    <location>
        <begin position="372"/>
        <end position="387"/>
    </location>
</feature>
<feature type="turn" evidence="21">
    <location>
        <begin position="388"/>
        <end position="390"/>
    </location>
</feature>
<feature type="strand" evidence="21">
    <location>
        <begin position="391"/>
        <end position="401"/>
    </location>
</feature>
<feature type="helix" evidence="21">
    <location>
        <begin position="403"/>
        <end position="406"/>
    </location>
</feature>
<feature type="strand" evidence="21">
    <location>
        <begin position="407"/>
        <end position="413"/>
    </location>
</feature>
<feature type="helix" evidence="21">
    <location>
        <begin position="416"/>
        <end position="418"/>
    </location>
</feature>
<feature type="strand" evidence="21">
    <location>
        <begin position="421"/>
        <end position="423"/>
    </location>
</feature>
<feature type="helix" evidence="21">
    <location>
        <begin position="426"/>
        <end position="428"/>
    </location>
</feature>
<feature type="helix" evidence="21">
    <location>
        <begin position="431"/>
        <end position="433"/>
    </location>
</feature>
<feature type="helix" evidence="21">
    <location>
        <begin position="434"/>
        <end position="437"/>
    </location>
</feature>
<feature type="turn" evidence="21">
    <location>
        <begin position="438"/>
        <end position="440"/>
    </location>
</feature>
<feature type="helix" evidence="21">
    <location>
        <begin position="445"/>
        <end position="448"/>
    </location>
</feature>
<feature type="turn" evidence="21">
    <location>
        <begin position="450"/>
        <end position="453"/>
    </location>
</feature>
<feature type="turn" evidence="21">
    <location>
        <begin position="464"/>
        <end position="467"/>
    </location>
</feature>
<feature type="helix" evidence="21">
    <location>
        <begin position="468"/>
        <end position="471"/>
    </location>
</feature>
<feature type="turn" evidence="21">
    <location>
        <begin position="472"/>
        <end position="474"/>
    </location>
</feature>
<feature type="turn" evidence="21">
    <location>
        <begin position="476"/>
        <end position="478"/>
    </location>
</feature>
<feature type="helix" evidence="21">
    <location>
        <begin position="481"/>
        <end position="483"/>
    </location>
</feature>
<feature type="strand" evidence="21">
    <location>
        <begin position="488"/>
        <end position="490"/>
    </location>
</feature>
<feature type="strand" evidence="21">
    <location>
        <begin position="494"/>
        <end position="497"/>
    </location>
</feature>
<feature type="helix" evidence="21">
    <location>
        <begin position="498"/>
        <end position="505"/>
    </location>
</feature>
<feature type="strand" evidence="21">
    <location>
        <begin position="511"/>
        <end position="517"/>
    </location>
</feature>
<feature type="strand" evidence="19">
    <location>
        <begin position="519"/>
        <end position="521"/>
    </location>
</feature>
<feature type="helix" evidence="21">
    <location>
        <begin position="535"/>
        <end position="537"/>
    </location>
</feature>
<feature type="strand" evidence="21">
    <location>
        <begin position="543"/>
        <end position="546"/>
    </location>
</feature>
<feature type="helix" evidence="21">
    <location>
        <begin position="548"/>
        <end position="550"/>
    </location>
</feature>
<feature type="strand" evidence="21">
    <location>
        <begin position="551"/>
        <end position="553"/>
    </location>
</feature>
<feature type="turn" evidence="19">
    <location>
        <begin position="554"/>
        <end position="556"/>
    </location>
</feature>
<feature type="helix" evidence="21">
    <location>
        <begin position="558"/>
        <end position="567"/>
    </location>
</feature>
<feature type="turn" evidence="21">
    <location>
        <begin position="573"/>
        <end position="577"/>
    </location>
</feature>
<feature type="strand" evidence="21">
    <location>
        <begin position="578"/>
        <end position="582"/>
    </location>
</feature>
<feature type="strand" evidence="19">
    <location>
        <begin position="590"/>
        <end position="592"/>
    </location>
</feature>
<feature type="strand" evidence="21">
    <location>
        <begin position="594"/>
        <end position="596"/>
    </location>
</feature>
<feature type="strand" evidence="22">
    <location>
        <begin position="601"/>
        <end position="603"/>
    </location>
</feature>
<feature type="strand" evidence="21">
    <location>
        <begin position="610"/>
        <end position="613"/>
    </location>
</feature>
<feature type="strand" evidence="19">
    <location>
        <begin position="621"/>
        <end position="623"/>
    </location>
</feature>
<feature type="strand" evidence="21">
    <location>
        <begin position="637"/>
        <end position="639"/>
    </location>
</feature>
<feature type="turn" evidence="21">
    <location>
        <begin position="641"/>
        <end position="643"/>
    </location>
</feature>
<feature type="helix" evidence="21">
    <location>
        <begin position="649"/>
        <end position="661"/>
    </location>
</feature>
<feature type="turn" evidence="21">
    <location>
        <begin position="662"/>
        <end position="666"/>
    </location>
</feature>
<feature type="strand" evidence="21">
    <location>
        <begin position="680"/>
        <end position="684"/>
    </location>
</feature>
<feature type="strand" evidence="21">
    <location>
        <begin position="689"/>
        <end position="692"/>
    </location>
</feature>
<feature type="helix" evidence="19">
    <location>
        <begin position="709"/>
        <end position="711"/>
    </location>
</feature>
<feature type="strand" evidence="21">
    <location>
        <begin position="712"/>
        <end position="714"/>
    </location>
</feature>
<feature type="turn" evidence="21">
    <location>
        <begin position="715"/>
        <end position="717"/>
    </location>
</feature>
<feature type="strand" evidence="21">
    <location>
        <begin position="718"/>
        <end position="722"/>
    </location>
</feature>
<feature type="strand" evidence="19">
    <location>
        <begin position="725"/>
        <end position="727"/>
    </location>
</feature>
<feature type="strand" evidence="21">
    <location>
        <begin position="733"/>
        <end position="735"/>
    </location>
</feature>
<feature type="helix" evidence="21">
    <location>
        <begin position="741"/>
        <end position="743"/>
    </location>
</feature>
<feature type="strand" evidence="21">
    <location>
        <begin position="744"/>
        <end position="746"/>
    </location>
</feature>
<feature type="strand" evidence="21">
    <location>
        <begin position="757"/>
        <end position="760"/>
    </location>
</feature>
<feature type="helix" evidence="21">
    <location>
        <begin position="763"/>
        <end position="765"/>
    </location>
</feature>
<feature type="turn" evidence="19">
    <location>
        <begin position="768"/>
        <end position="770"/>
    </location>
</feature>
<feature type="helix" evidence="21">
    <location>
        <begin position="777"/>
        <end position="779"/>
    </location>
</feature>
<feature type="strand" evidence="21">
    <location>
        <begin position="781"/>
        <end position="791"/>
    </location>
</feature>
<feature type="strand" evidence="21">
    <location>
        <begin position="793"/>
        <end position="802"/>
    </location>
</feature>
<feature type="strand" evidence="19">
    <location>
        <begin position="807"/>
        <end position="813"/>
    </location>
</feature>
<feature type="strand" evidence="21">
    <location>
        <begin position="815"/>
        <end position="820"/>
    </location>
</feature>
<feature type="strand" evidence="21">
    <location>
        <begin position="825"/>
        <end position="827"/>
    </location>
</feature>
<feature type="strand" evidence="21">
    <location>
        <begin position="835"/>
        <end position="837"/>
    </location>
</feature>
<feature type="strand" evidence="21">
    <location>
        <begin position="839"/>
        <end position="842"/>
    </location>
</feature>
<feature type="strand" evidence="21">
    <location>
        <begin position="850"/>
        <end position="858"/>
    </location>
</feature>
<feature type="strand" evidence="21">
    <location>
        <begin position="863"/>
        <end position="871"/>
    </location>
</feature>
<feature type="helix" evidence="21">
    <location>
        <begin position="876"/>
        <end position="878"/>
    </location>
</feature>
<feature type="strand" evidence="21">
    <location>
        <begin position="879"/>
        <end position="881"/>
    </location>
</feature>
<feature type="strand" evidence="21">
    <location>
        <begin position="885"/>
        <end position="892"/>
    </location>
</feature>
<feature type="helix" evidence="20">
    <location>
        <begin position="896"/>
        <end position="899"/>
    </location>
</feature>
<feature type="strand" evidence="21">
    <location>
        <begin position="904"/>
        <end position="910"/>
    </location>
</feature>
<feature type="strand" evidence="21">
    <location>
        <begin position="918"/>
        <end position="927"/>
    </location>
</feature>
<feature type="strand" evidence="21">
    <location>
        <begin position="938"/>
        <end position="941"/>
    </location>
</feature>
<feature type="strand" evidence="19">
    <location>
        <begin position="947"/>
        <end position="950"/>
    </location>
</feature>
<feature type="helix" evidence="21">
    <location>
        <begin position="954"/>
        <end position="956"/>
    </location>
</feature>
<feature type="strand" evidence="19">
    <location>
        <begin position="963"/>
        <end position="965"/>
    </location>
</feature>
<feature type="strand" evidence="21">
    <location>
        <begin position="969"/>
        <end position="971"/>
    </location>
</feature>
<feature type="turn" evidence="19">
    <location>
        <begin position="973"/>
        <end position="975"/>
    </location>
</feature>
<feature type="strand" evidence="21">
    <location>
        <begin position="981"/>
        <end position="984"/>
    </location>
</feature>
<feature type="turn" evidence="21">
    <location>
        <begin position="985"/>
        <end position="988"/>
    </location>
</feature>
<feature type="strand" evidence="21">
    <location>
        <begin position="989"/>
        <end position="992"/>
    </location>
</feature>
<feature type="turn" evidence="21">
    <location>
        <begin position="1001"/>
        <end position="1006"/>
    </location>
</feature>
<feature type="helix" evidence="21">
    <location>
        <begin position="1008"/>
        <end position="1011"/>
    </location>
</feature>
<feature type="strand" evidence="19">
    <location>
        <begin position="1019"/>
        <end position="1023"/>
    </location>
</feature>
<feature type="strand" evidence="19">
    <location>
        <begin position="1025"/>
        <end position="1031"/>
    </location>
</feature>
<feature type="strand" evidence="19">
    <location>
        <begin position="1034"/>
        <end position="1036"/>
    </location>
</feature>
<feature type="strand" evidence="22">
    <location>
        <begin position="1041"/>
        <end position="1044"/>
    </location>
</feature>
<feature type="strand" evidence="22">
    <location>
        <begin position="1052"/>
        <end position="1054"/>
    </location>
</feature>
<feature type="turn" evidence="20">
    <location>
        <begin position="1059"/>
        <end position="1061"/>
    </location>
</feature>
<feature type="helix" evidence="19">
    <location>
        <begin position="1062"/>
        <end position="1064"/>
    </location>
</feature>
<feature type="strand" evidence="22">
    <location>
        <begin position="1065"/>
        <end position="1067"/>
    </location>
</feature>
<feature type="helix" evidence="19">
    <location>
        <begin position="1078"/>
        <end position="1080"/>
    </location>
</feature>
<feature type="strand" evidence="19">
    <location>
        <begin position="1084"/>
        <end position="1089"/>
    </location>
</feature>
<feature type="strand" evidence="19">
    <location>
        <begin position="1097"/>
        <end position="1105"/>
    </location>
</feature>
<feature type="turn" evidence="20">
    <location>
        <begin position="1110"/>
        <end position="1112"/>
    </location>
</feature>
<feature type="strand" evidence="19">
    <location>
        <begin position="1117"/>
        <end position="1124"/>
    </location>
</feature>
<feature type="strand" evidence="19">
    <location>
        <begin position="1129"/>
        <end position="1136"/>
    </location>
</feature>
<feature type="strand" evidence="19">
    <location>
        <begin position="1143"/>
        <end position="1147"/>
    </location>
</feature>
<feature type="strand" evidence="22">
    <location>
        <begin position="1149"/>
        <end position="1151"/>
    </location>
</feature>
<feature type="strand" evidence="19">
    <location>
        <begin position="1159"/>
        <end position="1168"/>
    </location>
</feature>
<feature type="strand" evidence="19">
    <location>
        <begin position="1172"/>
        <end position="1183"/>
    </location>
</feature>
<feature type="helix" evidence="19">
    <location>
        <begin position="1186"/>
        <end position="1189"/>
    </location>
</feature>
<feature type="strand" evidence="19">
    <location>
        <begin position="1196"/>
        <end position="1198"/>
    </location>
</feature>
<feature type="strand" evidence="19">
    <location>
        <begin position="1200"/>
        <end position="1207"/>
    </location>
</feature>
<feature type="strand" evidence="19">
    <location>
        <begin position="1223"/>
        <end position="1231"/>
    </location>
</feature>
<feature type="strand" evidence="19">
    <location>
        <begin position="1238"/>
        <end position="1242"/>
    </location>
</feature>
<feature type="strand" evidence="19">
    <location>
        <begin position="1246"/>
        <end position="1252"/>
    </location>
</feature>
<feature type="strand" evidence="19">
    <location>
        <begin position="1261"/>
        <end position="1266"/>
    </location>
</feature>
<feature type="strand" evidence="19">
    <location>
        <begin position="1273"/>
        <end position="1282"/>
    </location>
</feature>
<feature type="turn" evidence="21">
    <location>
        <begin position="1290"/>
        <end position="1292"/>
    </location>
</feature>
<feature type="strand" evidence="21">
    <location>
        <begin position="1293"/>
        <end position="1299"/>
    </location>
</feature>
<feature type="turn" evidence="22">
    <location>
        <begin position="1301"/>
        <end position="1304"/>
    </location>
</feature>
<feature type="strand" evidence="21">
    <location>
        <begin position="1309"/>
        <end position="1314"/>
    </location>
</feature>
<feature type="strand" evidence="21">
    <location>
        <begin position="1319"/>
        <end position="1323"/>
    </location>
</feature>
<feature type="strand" evidence="21">
    <location>
        <begin position="1326"/>
        <end position="1329"/>
    </location>
</feature>
<feature type="strand" evidence="21">
    <location>
        <begin position="1333"/>
        <end position="1335"/>
    </location>
</feature>
<feature type="strand" evidence="21">
    <location>
        <begin position="1339"/>
        <end position="1343"/>
    </location>
</feature>
<feature type="strand" evidence="21">
    <location>
        <begin position="1355"/>
        <end position="1357"/>
    </location>
</feature>
<feature type="helix" evidence="21">
    <location>
        <begin position="1360"/>
        <end position="1363"/>
    </location>
</feature>
<feature type="strand" evidence="21">
    <location>
        <begin position="1372"/>
        <end position="1377"/>
    </location>
</feature>
<feature type="strand" evidence="21">
    <location>
        <begin position="1388"/>
        <end position="1390"/>
    </location>
</feature>
<feature type="strand" evidence="21">
    <location>
        <begin position="1394"/>
        <end position="1399"/>
    </location>
</feature>
<feature type="helix" evidence="20">
    <location>
        <begin position="1420"/>
        <end position="1422"/>
    </location>
</feature>
<feature type="strand" evidence="20">
    <location>
        <begin position="1429"/>
        <end position="1433"/>
    </location>
</feature>
<feature type="strand" evidence="20">
    <location>
        <begin position="1454"/>
        <end position="1456"/>
    </location>
</feature>
<feature type="strand" evidence="21">
    <location>
        <begin position="1486"/>
        <end position="1491"/>
    </location>
</feature>
<feature type="turn" evidence="21">
    <location>
        <begin position="1493"/>
        <end position="1496"/>
    </location>
</feature>
<feature type="strand" evidence="21">
    <location>
        <begin position="1501"/>
        <end position="1508"/>
    </location>
</feature>
<feature type="strand" evidence="21">
    <location>
        <begin position="1511"/>
        <end position="1515"/>
    </location>
</feature>
<feature type="helix" evidence="21">
    <location>
        <begin position="1522"/>
        <end position="1524"/>
    </location>
</feature>
<feature type="strand" evidence="21">
    <location>
        <begin position="1536"/>
        <end position="1539"/>
    </location>
</feature>
<feature type="strand" evidence="21">
    <location>
        <begin position="1545"/>
        <end position="1547"/>
    </location>
</feature>
<feature type="helix" evidence="21">
    <location>
        <begin position="1549"/>
        <end position="1551"/>
    </location>
</feature>
<feature type="strand" evidence="21">
    <location>
        <begin position="1553"/>
        <end position="1556"/>
    </location>
</feature>
<feature type="turn" evidence="21">
    <location>
        <begin position="1560"/>
        <end position="1563"/>
    </location>
</feature>
<feature type="strand" evidence="21">
    <location>
        <begin position="1564"/>
        <end position="1568"/>
    </location>
</feature>
<feature type="turn" evidence="21">
    <location>
        <begin position="1569"/>
        <end position="1571"/>
    </location>
</feature>
<feature type="helix" evidence="21">
    <location>
        <begin position="1574"/>
        <end position="1576"/>
    </location>
</feature>
<feature type="helix" evidence="21">
    <location>
        <begin position="1577"/>
        <end position="1580"/>
    </location>
</feature>
<feature type="turn" evidence="21">
    <location>
        <begin position="1585"/>
        <end position="1587"/>
    </location>
</feature>
<feature type="strand" evidence="21">
    <location>
        <begin position="1588"/>
        <end position="1592"/>
    </location>
</feature>
<feature type="strand" evidence="21">
    <location>
        <begin position="1594"/>
        <end position="1597"/>
    </location>
</feature>
<feature type="turn" evidence="21">
    <location>
        <begin position="1602"/>
        <end position="1606"/>
    </location>
</feature>
<feature type="helix" evidence="21">
    <location>
        <begin position="1614"/>
        <end position="1616"/>
    </location>
</feature>
<gene>
    <name type="primary">PAPPA</name>
</gene>
<accession>Q13219</accession>
<accession>B1AMF9</accession>
<accession>Q08371</accession>
<accession>Q68G52</accession>
<accession>Q9UDK7</accession>
<organism>
    <name type="scientific">Homo sapiens</name>
    <name type="common">Human</name>
    <dbReference type="NCBI Taxonomy" id="9606"/>
    <lineage>
        <taxon>Eukaryota</taxon>
        <taxon>Metazoa</taxon>
        <taxon>Chordata</taxon>
        <taxon>Craniata</taxon>
        <taxon>Vertebrata</taxon>
        <taxon>Euteleostomi</taxon>
        <taxon>Mammalia</taxon>
        <taxon>Eutheria</taxon>
        <taxon>Euarchontoglires</taxon>
        <taxon>Primates</taxon>
        <taxon>Haplorrhini</taxon>
        <taxon>Catarrhini</taxon>
        <taxon>Hominidae</taxon>
        <taxon>Homo</taxon>
    </lineage>
</organism>
<name>PAPP1_HUMAN</name>
<dbReference type="EC" id="3.4.24.79"/>
<dbReference type="EMBL" id="U28727">
    <property type="protein sequence ID" value="AAC50543.1"/>
    <property type="status" value="ALT_FRAME"/>
    <property type="molecule type" value="mRNA"/>
</dbReference>
<dbReference type="EMBL" id="AL137024">
    <property type="status" value="NOT_ANNOTATED_CDS"/>
    <property type="molecule type" value="Genomic_DNA"/>
</dbReference>
<dbReference type="EMBL" id="AL353141">
    <property type="status" value="NOT_ANNOTATED_CDS"/>
    <property type="molecule type" value="Genomic_DNA"/>
</dbReference>
<dbReference type="EMBL" id="AL691426">
    <property type="status" value="NOT_ANNOTATED_CDS"/>
    <property type="molecule type" value="Genomic_DNA"/>
</dbReference>
<dbReference type="EMBL" id="BC078657">
    <property type="protein sequence ID" value="AAH78657.1"/>
    <property type="molecule type" value="mRNA"/>
</dbReference>
<dbReference type="EMBL" id="X68280">
    <property type="protein sequence ID" value="CAA48341.1"/>
    <property type="molecule type" value="mRNA"/>
</dbReference>
<dbReference type="CCDS" id="CCDS6813.1"/>
<dbReference type="PIR" id="S65464">
    <property type="entry name" value="S65464"/>
</dbReference>
<dbReference type="RefSeq" id="NP_002572.2">
    <property type="nucleotide sequence ID" value="NM_002581.4"/>
</dbReference>
<dbReference type="PDB" id="7UFG">
    <property type="method" value="EM"/>
    <property type="resolution" value="3.28 A"/>
    <property type="chains" value="A/B=81-1627"/>
</dbReference>
<dbReference type="PDB" id="7Y5N">
    <property type="method" value="EM"/>
    <property type="resolution" value="3.45 A"/>
    <property type="chains" value="C/D=81-1627"/>
</dbReference>
<dbReference type="PDB" id="7Y5Q">
    <property type="method" value="EM"/>
    <property type="resolution" value="3.80 A"/>
    <property type="chains" value="A/B=81-1627"/>
</dbReference>
<dbReference type="PDB" id="8A7D">
    <property type="method" value="EM"/>
    <property type="resolution" value="3.06 A"/>
    <property type="chains" value="C/Q=82-1617"/>
</dbReference>
<dbReference type="PDB" id="8A7E">
    <property type="method" value="EM"/>
    <property type="resolution" value="5.02 A"/>
    <property type="chains" value="C/Q=82-1617"/>
</dbReference>
<dbReference type="PDB" id="8D8O">
    <property type="method" value="EM"/>
    <property type="resolution" value="3.35 A"/>
    <property type="chains" value="A/B=81-1627"/>
</dbReference>
<dbReference type="PDB" id="8HGG">
    <property type="method" value="EM"/>
    <property type="resolution" value="3.64 A"/>
    <property type="chains" value="C/D=1-1627"/>
</dbReference>
<dbReference type="PDB" id="8HGH">
    <property type="method" value="EM"/>
    <property type="resolution" value="4.16 A"/>
    <property type="chains" value="A/B=81-1627"/>
</dbReference>
<dbReference type="PDBsum" id="7UFG"/>
<dbReference type="PDBsum" id="7Y5N"/>
<dbReference type="PDBsum" id="7Y5Q"/>
<dbReference type="PDBsum" id="8A7D"/>
<dbReference type="PDBsum" id="8A7E"/>
<dbReference type="PDBsum" id="8D8O"/>
<dbReference type="PDBsum" id="8HGG"/>
<dbReference type="PDBsum" id="8HGH"/>
<dbReference type="EMDB" id="EMD-15217"/>
<dbReference type="EMDB" id="EMD-15219"/>
<dbReference type="EMDB" id="EMD-15220"/>
<dbReference type="EMDB" id="EMD-15221"/>
<dbReference type="EMDB" id="EMD-26475"/>
<dbReference type="EMDB" id="EMD-27253"/>
<dbReference type="EMDB" id="EMD-33621"/>
<dbReference type="EMDB" id="EMD-33622"/>
<dbReference type="EMDB" id="EMD-34738"/>
<dbReference type="EMDB" id="EMD-34739"/>
<dbReference type="SMR" id="Q13219"/>
<dbReference type="BioGRID" id="111104">
    <property type="interactions" value="15"/>
</dbReference>
<dbReference type="CORUM" id="Q13219"/>
<dbReference type="FunCoup" id="Q13219">
    <property type="interactions" value="351"/>
</dbReference>
<dbReference type="IntAct" id="Q13219">
    <property type="interactions" value="10"/>
</dbReference>
<dbReference type="MINT" id="Q13219"/>
<dbReference type="STRING" id="9606.ENSP00000330658"/>
<dbReference type="DrugBank" id="DB12695">
    <property type="generic name" value="Phenethyl Isothiocyanate"/>
</dbReference>
<dbReference type="MEROPS" id="M43.004"/>
<dbReference type="GlyConnect" id="1594">
    <property type="glycosylation" value="1 N-Linked glycan (1 site)"/>
</dbReference>
<dbReference type="GlyCosmos" id="Q13219">
    <property type="glycosylation" value="14 sites, 1 glycan"/>
</dbReference>
<dbReference type="GlyGen" id="Q13219">
    <property type="glycosylation" value="14 sites, 10 N-linked glycans (6 sites)"/>
</dbReference>
<dbReference type="iPTMnet" id="Q13219"/>
<dbReference type="PhosphoSitePlus" id="Q13219"/>
<dbReference type="BioMuta" id="PAPPA"/>
<dbReference type="DMDM" id="223590248"/>
<dbReference type="jPOST" id="Q13219"/>
<dbReference type="MassIVE" id="Q13219"/>
<dbReference type="PaxDb" id="9606-ENSP00000330658"/>
<dbReference type="PeptideAtlas" id="Q13219"/>
<dbReference type="ProteomicsDB" id="59231"/>
<dbReference type="Pumba" id="Q13219"/>
<dbReference type="Antibodypedia" id="3385">
    <property type="antibodies" value="908 antibodies from 33 providers"/>
</dbReference>
<dbReference type="DNASU" id="5069"/>
<dbReference type="Ensembl" id="ENST00000328252.4">
    <property type="protein sequence ID" value="ENSP00000330658.3"/>
    <property type="gene ID" value="ENSG00000182752.10"/>
</dbReference>
<dbReference type="GeneID" id="5069"/>
<dbReference type="KEGG" id="hsa:5069"/>
<dbReference type="MANE-Select" id="ENST00000328252.4">
    <property type="protein sequence ID" value="ENSP00000330658.3"/>
    <property type="RefSeq nucleotide sequence ID" value="NM_002581.5"/>
    <property type="RefSeq protein sequence ID" value="NP_002572.2"/>
</dbReference>
<dbReference type="UCSC" id="uc004bjn.4">
    <property type="organism name" value="human"/>
</dbReference>
<dbReference type="AGR" id="HGNC:8602"/>
<dbReference type="CTD" id="5069"/>
<dbReference type="DisGeNET" id="5069"/>
<dbReference type="GeneCards" id="PAPPA"/>
<dbReference type="HGNC" id="HGNC:8602">
    <property type="gene designation" value="PAPPA"/>
</dbReference>
<dbReference type="HPA" id="ENSG00000182752">
    <property type="expression patterns" value="Tissue enriched (placenta)"/>
</dbReference>
<dbReference type="MIM" id="176385">
    <property type="type" value="gene"/>
</dbReference>
<dbReference type="neXtProt" id="NX_Q13219"/>
<dbReference type="OpenTargets" id="ENSG00000182752"/>
<dbReference type="PharmGKB" id="PA32935"/>
<dbReference type="VEuPathDB" id="HostDB:ENSG00000182752"/>
<dbReference type="eggNOG" id="ENOG502QQ7Z">
    <property type="taxonomic scope" value="Eukaryota"/>
</dbReference>
<dbReference type="GeneTree" id="ENSGT00940000156654"/>
<dbReference type="HOGENOM" id="CLU_002636_2_0_1"/>
<dbReference type="InParanoid" id="Q13219"/>
<dbReference type="OMA" id="KQVVCEP"/>
<dbReference type="OrthoDB" id="536211at2759"/>
<dbReference type="PAN-GO" id="Q13219">
    <property type="GO annotations" value="4 GO annotations based on evolutionary models"/>
</dbReference>
<dbReference type="PhylomeDB" id="Q13219"/>
<dbReference type="TreeFam" id="TF331636"/>
<dbReference type="BioCyc" id="MetaCyc:ENSG00000119398-MONOMER"/>
<dbReference type="BRENDA" id="3.4.24.79">
    <property type="organism ID" value="2681"/>
</dbReference>
<dbReference type="PathwayCommons" id="Q13219"/>
<dbReference type="Reactome" id="R-HSA-381426">
    <property type="pathway name" value="Regulation of Insulin-like Growth Factor (IGF) transport and uptake by Insulin-like Growth Factor Binding Proteins (IGFBPs)"/>
</dbReference>
<dbReference type="SignaLink" id="Q13219"/>
<dbReference type="BioGRID-ORCS" id="5069">
    <property type="hits" value="28 hits in 1147 CRISPR screens"/>
</dbReference>
<dbReference type="ChiTaRS" id="PAPPA">
    <property type="organism name" value="human"/>
</dbReference>
<dbReference type="GeneWiki" id="Pregnancy-associated_plasma_protein_A"/>
<dbReference type="GenomeRNAi" id="5069"/>
<dbReference type="Pharos" id="Q13219">
    <property type="development level" value="Tbio"/>
</dbReference>
<dbReference type="PRO" id="PR:Q13219"/>
<dbReference type="Proteomes" id="UP000005640">
    <property type="component" value="Chromosome 9"/>
</dbReference>
<dbReference type="RNAct" id="Q13219">
    <property type="molecule type" value="protein"/>
</dbReference>
<dbReference type="Bgee" id="ENSG00000182752">
    <property type="expression patterns" value="Expressed in decidua and 177 other cell types or tissues"/>
</dbReference>
<dbReference type="GO" id="GO:0005576">
    <property type="term" value="C:extracellular region"/>
    <property type="evidence" value="ECO:0000314"/>
    <property type="project" value="UniProtKB"/>
</dbReference>
<dbReference type="GO" id="GO:0005615">
    <property type="term" value="C:extracellular space"/>
    <property type="evidence" value="ECO:0000318"/>
    <property type="project" value="GO_Central"/>
</dbReference>
<dbReference type="GO" id="GO:0004222">
    <property type="term" value="F:metalloendopeptidase activity"/>
    <property type="evidence" value="ECO:0000269"/>
    <property type="project" value="Reactome"/>
</dbReference>
<dbReference type="GO" id="GO:0008237">
    <property type="term" value="F:metallopeptidase activity"/>
    <property type="evidence" value="ECO:0000314"/>
    <property type="project" value="UniProtKB"/>
</dbReference>
<dbReference type="GO" id="GO:0008270">
    <property type="term" value="F:zinc ion binding"/>
    <property type="evidence" value="ECO:0000304"/>
    <property type="project" value="ProtInc"/>
</dbReference>
<dbReference type="GO" id="GO:0007166">
    <property type="term" value="P:cell surface receptor signaling pathway"/>
    <property type="evidence" value="ECO:0000318"/>
    <property type="project" value="GO_Central"/>
</dbReference>
<dbReference type="GO" id="GO:0007565">
    <property type="term" value="P:female pregnancy"/>
    <property type="evidence" value="ECO:0000304"/>
    <property type="project" value="ProtInc"/>
</dbReference>
<dbReference type="GO" id="GO:0006508">
    <property type="term" value="P:proteolysis"/>
    <property type="evidence" value="ECO:0000318"/>
    <property type="project" value="GO_Central"/>
</dbReference>
<dbReference type="CDD" id="cd00033">
    <property type="entry name" value="CCP"/>
    <property type="match status" value="4"/>
</dbReference>
<dbReference type="CDD" id="cd04275">
    <property type="entry name" value="ZnMc_pappalysin_like"/>
    <property type="match status" value="1"/>
</dbReference>
<dbReference type="FunFam" id="2.10.70.10:FF:000045">
    <property type="entry name" value="Pappalysin 1"/>
    <property type="match status" value="1"/>
</dbReference>
<dbReference type="FunFam" id="2.10.70.10:FF:000057">
    <property type="entry name" value="Pappalysin 1"/>
    <property type="match status" value="1"/>
</dbReference>
<dbReference type="FunFam" id="2.10.70.10:FF:000061">
    <property type="entry name" value="Pappalysin 1"/>
    <property type="match status" value="1"/>
</dbReference>
<dbReference type="FunFam" id="2.10.70.10:FF:000068">
    <property type="entry name" value="Pappalysin 1"/>
    <property type="match status" value="1"/>
</dbReference>
<dbReference type="FunFam" id="2.60.120.200:FF:000097">
    <property type="entry name" value="Pappalysin 1"/>
    <property type="match status" value="1"/>
</dbReference>
<dbReference type="FunFam" id="3.40.390.10:FF:000026">
    <property type="entry name" value="Pappalysin 1"/>
    <property type="match status" value="1"/>
</dbReference>
<dbReference type="Gene3D" id="2.60.120.200">
    <property type="match status" value="1"/>
</dbReference>
<dbReference type="Gene3D" id="3.40.390.10">
    <property type="entry name" value="Collagenase (Catalytic Domain)"/>
    <property type="match status" value="1"/>
</dbReference>
<dbReference type="Gene3D" id="2.10.70.10">
    <property type="entry name" value="Complement Module, domain 1"/>
    <property type="match status" value="4"/>
</dbReference>
<dbReference type="InterPro" id="IPR013320">
    <property type="entry name" value="ConA-like_dom_sf"/>
</dbReference>
<dbReference type="InterPro" id="IPR006558">
    <property type="entry name" value="LamG-like"/>
</dbReference>
<dbReference type="InterPro" id="IPR024079">
    <property type="entry name" value="MetalloPept_cat_dom_sf"/>
</dbReference>
<dbReference type="InterPro" id="IPR011936">
    <property type="entry name" value="Myxo_disulph_rpt"/>
</dbReference>
<dbReference type="InterPro" id="IPR000800">
    <property type="entry name" value="Notch_dom"/>
</dbReference>
<dbReference type="InterPro" id="IPR043543">
    <property type="entry name" value="PAPPA/PAPPA2"/>
</dbReference>
<dbReference type="InterPro" id="IPR008754">
    <property type="entry name" value="Peptidase_M43"/>
</dbReference>
<dbReference type="InterPro" id="IPR035976">
    <property type="entry name" value="Sushi/SCR/CCP_sf"/>
</dbReference>
<dbReference type="InterPro" id="IPR000436">
    <property type="entry name" value="Sushi_SCR_CCP_dom"/>
</dbReference>
<dbReference type="NCBIfam" id="TIGR02232">
    <property type="entry name" value="myxo_disulf_rpt"/>
    <property type="match status" value="1"/>
</dbReference>
<dbReference type="PANTHER" id="PTHR46130">
    <property type="entry name" value="LAMGL DOMAIN-CONTAINING PROTEIN"/>
    <property type="match status" value="1"/>
</dbReference>
<dbReference type="PANTHER" id="PTHR46130:SF2">
    <property type="entry name" value="PAPPALYSIN-1"/>
    <property type="match status" value="1"/>
</dbReference>
<dbReference type="Pfam" id="PF13385">
    <property type="entry name" value="Laminin_G_3"/>
    <property type="match status" value="1"/>
</dbReference>
<dbReference type="Pfam" id="PF05572">
    <property type="entry name" value="Peptidase_M43"/>
    <property type="match status" value="1"/>
</dbReference>
<dbReference type="Pfam" id="PF00084">
    <property type="entry name" value="Sushi"/>
    <property type="match status" value="2"/>
</dbReference>
<dbReference type="SMART" id="SM00032">
    <property type="entry name" value="CCP"/>
    <property type="match status" value="4"/>
</dbReference>
<dbReference type="SMART" id="SM00560">
    <property type="entry name" value="LamGL"/>
    <property type="match status" value="1"/>
</dbReference>
<dbReference type="SMART" id="SM00004">
    <property type="entry name" value="NL"/>
    <property type="match status" value="3"/>
</dbReference>
<dbReference type="SUPFAM" id="SSF57535">
    <property type="entry name" value="Complement control module/SCR domain"/>
    <property type="match status" value="4"/>
</dbReference>
<dbReference type="SUPFAM" id="SSF49899">
    <property type="entry name" value="Concanavalin A-like lectins/glucanases"/>
    <property type="match status" value="1"/>
</dbReference>
<dbReference type="SUPFAM" id="SSF55486">
    <property type="entry name" value="Metalloproteases ('zincins'), catalytic domain"/>
    <property type="match status" value="1"/>
</dbReference>
<dbReference type="PROSITE" id="PS50923">
    <property type="entry name" value="SUSHI"/>
    <property type="match status" value="5"/>
</dbReference>
<dbReference type="PROSITE" id="PS00142">
    <property type="entry name" value="ZINC_PROTEASE"/>
    <property type="match status" value="1"/>
</dbReference>
<proteinExistence type="evidence at protein level"/>
<sequence>MRLWSWVLHLGLLSAALGCGLAERPRRARRDPRAGRPPRPAAGPATCATRAARGRRASPPPPPPPGGAWEAVRVPRRRQQREARGATEEPSPPSRALYFSGRGEQLRLRADLELPRDAFTLQVWLRAEGGQRSPAVITGLYDKCSYISRDRGWVVGIHTISDQDNKDPRYFFSLKTDRARQVTTINAHRSYLPGQWVYLAATYDGQFMKLYVNGAQVATSGEQVGGIFSPLTQKCKVLMLGGSALNHNYRGYIEHFSLWKVARTQREILSDMETHGAHTALPQLLLQENWDNVKHAWSPMKDGSSPKVEFSNAHGFLLDTSLEPPLCGQTLCDNTEVIASYNQLSSFRQPKVVRYRVVNLYEDDHKNPTVTREQVDFQHHQLAEAFKQYNISWELDVLEVSNSSLRRRLILANCDISKIGDENCDPECNHTLTGHDGGDCRHLRHPAFVKKQHNGVCDMDCNYERFNFDGGECCDPEITNVTQTCFDPDSPHRAYLDVNELKNILKLDGSTHLNIFFAKSSEEELAGVATWPWDKEALMHLGGIVLNPSFYGMPGHTHTMIHEIGHSLGLYHVFRGISEIQSCSDPCMETEPSFETGDLCNDTNPAPKHKSCGDPGPGNDTCGFHSFFNTPYNNFMSYADDDCTDSFTPNQVARMHCYLDLVYQGWQPSRKPAPVALAPQVLGHTTDSVTLEWFPPIDGHFFERELGSACHLCLEGRILVQYASNASSPMPCSPSGHWSPREAEGHPDVEQPCKSSVRTWSPNSAVNPHTVPPACPEPQGCYLELEFLYPLVPESLTIWVTFVSTDWDSSGAVNDIKLLAVSGKNISLGPQNVFCDVPLTIRLWDVGEEVYGIQIYTLDEHLEIDAAMLTSTADTPLCLQCKPLKYKVVRDPPLQMDVASILHLNRKFVDMDLNLGSVYQYWVITISGTEESEPSPAVTYIHGSGYCGDGIIQKDQGEQCDDMNKINGDGCSLFCRQEVSFNCIDEPSRCYFHDGDGVCEEFEQKTSIKDCGVYTPQGFLDQWASNASVSHQDQQCPGWVIIGQPAASQVCRTKVIDLSEGISQHAWYPCTISYPYSQLAQTTFWLRAYFSQPMVAAAVIVHLVTDGTYYGDQKQETISVQLLDTKDQSHDLGLHVLSCRNNPLIIPVVHDLSQPFYHSQAVRVSFSSPLVAISGVALRSFDNFDPVTLSSCQRGETYSPAEQSCVHFACEKTDCPELAVENASLNCSSSDRYHGAQCTVSCRTGYVLQIRRDDELIKSQTGPSVTVTCTEGKWNKQVACEPVDCSIPDHHQVYAASFSCPEGTTFGSQCSFQCRHPAQLKGNNSLLTCMEDGLWSFPEALCELMCLAPPPVPNADLQTARCRENKHKVGSFCKYKCKPGYHVPGSSRKSKKRAFKTQCTQDGSWQEGACVPVTCDPPPPKFHGLYQCTNGFQFNSECRIKCEDSDASQGLGSNVIHCRKDGTWNGSFHVCQEMQGQCSVPNELNSNLKLQCPDGYAIGSECATSCLDHNSESIILPMNVTVRDIPHWLNPTRVERVVCTAGLKWYPHPALIHCVKGCEPFMGDNYCDAINNRAFCNYDGGDCCTSTVKTKKVTPFPMSCDLQGDCACRDPQAQEHSRKDLRGYSHG</sequence>
<keyword id="KW-0002">3D-structure</keyword>
<keyword id="KW-0903">Direct protein sequencing</keyword>
<keyword id="KW-1015">Disulfide bond</keyword>
<keyword id="KW-0325">Glycoprotein</keyword>
<keyword id="KW-0378">Hydrolase</keyword>
<keyword id="KW-0479">Metal-binding</keyword>
<keyword id="KW-0482">Metalloprotease</keyword>
<keyword id="KW-0645">Protease</keyword>
<keyword id="KW-1267">Proteomics identification</keyword>
<keyword id="KW-1185">Reference proteome</keyword>
<keyword id="KW-0677">Repeat</keyword>
<keyword id="KW-0964">Secreted</keyword>
<keyword id="KW-0732">Signal</keyword>
<keyword id="KW-0768">Sushi</keyword>
<keyword id="KW-0862">Zinc</keyword>
<keyword id="KW-0865">Zymogen</keyword>